<proteinExistence type="evidence at protein level"/>
<reference key="1">
    <citation type="journal article" date="1987" name="Biochem. J.">
        <title>A glucagon-like peptide, structurally related to mammalian oxyntomodulin, from the pancreas of a holocephalan fish, Hydrolagus colliei.</title>
        <authorList>
            <person name="Conlon J.M."/>
            <person name="Dafgaard E."/>
            <person name="Falkmer S."/>
            <person name="Thim L."/>
        </authorList>
    </citation>
    <scope>PROTEIN SEQUENCE</scope>
    <source>
        <tissue>Pancreas</tissue>
    </source>
</reference>
<feature type="peptide" id="PRO_0000044744" description="Glucagon">
    <location>
        <begin position="1"/>
        <end position="36"/>
    </location>
</feature>
<organism>
    <name type="scientific">Hydrolagus colliei</name>
    <name type="common">Spotted ratfish</name>
    <name type="synonym">Chimaera colliei</name>
    <dbReference type="NCBI Taxonomy" id="7873"/>
    <lineage>
        <taxon>Eukaryota</taxon>
        <taxon>Metazoa</taxon>
        <taxon>Chordata</taxon>
        <taxon>Craniata</taxon>
        <taxon>Vertebrata</taxon>
        <taxon>Chondrichthyes</taxon>
        <taxon>Holocephali</taxon>
        <taxon>Chimaeriformes</taxon>
        <taxon>Chimaeridae</taxon>
        <taxon>Hydrolagus</taxon>
    </lineage>
</organism>
<protein>
    <recommendedName>
        <fullName>Glucagon</fullName>
    </recommendedName>
</protein>
<dbReference type="PIR" id="A27885">
    <property type="entry name" value="GCFI"/>
</dbReference>
<dbReference type="SMR" id="P09682"/>
<dbReference type="GO" id="GO:0005576">
    <property type="term" value="C:extracellular region"/>
    <property type="evidence" value="ECO:0007669"/>
    <property type="project" value="UniProtKB-SubCell"/>
</dbReference>
<dbReference type="GO" id="GO:0005179">
    <property type="term" value="F:hormone activity"/>
    <property type="evidence" value="ECO:0007669"/>
    <property type="project" value="InterPro"/>
</dbReference>
<dbReference type="Gene3D" id="6.10.250.590">
    <property type="match status" value="1"/>
</dbReference>
<dbReference type="InterPro" id="IPR015550">
    <property type="entry name" value="Glucagon"/>
</dbReference>
<dbReference type="InterPro" id="IPR000532">
    <property type="entry name" value="Glucagon_GIP_secretin_VIP"/>
</dbReference>
<dbReference type="PANTHER" id="PTHR11418">
    <property type="entry name" value="GLUCAGON"/>
    <property type="match status" value="1"/>
</dbReference>
<dbReference type="PANTHER" id="PTHR11418:SF0">
    <property type="entry name" value="PRO-GLUCAGON"/>
    <property type="match status" value="1"/>
</dbReference>
<dbReference type="Pfam" id="PF00123">
    <property type="entry name" value="Hormone_2"/>
    <property type="match status" value="1"/>
</dbReference>
<dbReference type="PRINTS" id="PR00275">
    <property type="entry name" value="GLUCAGON"/>
</dbReference>
<dbReference type="SMART" id="SM00070">
    <property type="entry name" value="GLUCA"/>
    <property type="match status" value="1"/>
</dbReference>
<dbReference type="PROSITE" id="PS00260">
    <property type="entry name" value="GLUCAGON"/>
    <property type="match status" value="1"/>
</dbReference>
<name>GLUC_HYDCO</name>
<comment type="function">
    <text>Promotes hydrolysis of glycogen and lipids, and raises the blood sugar level.</text>
</comment>
<comment type="subcellular location">
    <subcellularLocation>
        <location>Secreted</location>
    </subcellularLocation>
</comment>
<comment type="tissue specificity">
    <text>Produced by the X-cells of the islets of pancreas.</text>
</comment>
<comment type="similarity">
    <text evidence="1">Belongs to the glucagon family.</text>
</comment>
<sequence length="36" mass="4236">HTDGIFSSDYSKYLDNRRTKDFVQWLLSTKRNGANT</sequence>
<evidence type="ECO:0000305" key="1"/>
<gene>
    <name type="primary">gcg</name>
</gene>
<keyword id="KW-0903">Direct protein sequencing</keyword>
<keyword id="KW-0964">Secreted</keyword>
<accession>P09682</accession>